<organism>
    <name type="scientific">Rattus norvegicus</name>
    <name type="common">Rat</name>
    <dbReference type="NCBI Taxonomy" id="10116"/>
    <lineage>
        <taxon>Eukaryota</taxon>
        <taxon>Metazoa</taxon>
        <taxon>Chordata</taxon>
        <taxon>Craniata</taxon>
        <taxon>Vertebrata</taxon>
        <taxon>Euteleostomi</taxon>
        <taxon>Mammalia</taxon>
        <taxon>Eutheria</taxon>
        <taxon>Euarchontoglires</taxon>
        <taxon>Glires</taxon>
        <taxon>Rodentia</taxon>
        <taxon>Myomorpha</taxon>
        <taxon>Muroidea</taxon>
        <taxon>Muridae</taxon>
        <taxon>Murinae</taxon>
        <taxon>Rattus</taxon>
    </lineage>
</organism>
<gene>
    <name type="primary">Agtr1</name>
    <name type="synonym">Agtr1a</name>
    <name type="synonym">At1a</name>
</gene>
<name>AGTRA_RAT</name>
<evidence type="ECO:0000250" key="1">
    <source>
        <dbReference type="UniProtKB" id="P30556"/>
    </source>
</evidence>
<evidence type="ECO:0000255" key="2"/>
<evidence type="ECO:0000255" key="3">
    <source>
        <dbReference type="PROSITE-ProRule" id="PRU00521"/>
    </source>
</evidence>
<evidence type="ECO:0000256" key="4">
    <source>
        <dbReference type="SAM" id="MobiDB-lite"/>
    </source>
</evidence>
<evidence type="ECO:0000269" key="5">
    <source>
    </source>
</evidence>
<evidence type="ECO:0000269" key="6">
    <source>
    </source>
</evidence>
<evidence type="ECO:0000269" key="7">
    <source>
    </source>
</evidence>
<evidence type="ECO:0000303" key="8">
    <source>
    </source>
</evidence>
<evidence type="ECO:0000303" key="9">
    <source>
    </source>
</evidence>
<evidence type="ECO:0000303" key="10">
    <source>
    </source>
</evidence>
<evidence type="ECO:0000305" key="11"/>
<keyword id="KW-1003">Cell membrane</keyword>
<keyword id="KW-1015">Disulfide bond</keyword>
<keyword id="KW-0297">G-protein coupled receptor</keyword>
<keyword id="KW-0325">Glycoprotein</keyword>
<keyword id="KW-0449">Lipoprotein</keyword>
<keyword id="KW-0472">Membrane</keyword>
<keyword id="KW-0564">Palmitate</keyword>
<keyword id="KW-0597">Phosphoprotein</keyword>
<keyword id="KW-0675">Receptor</keyword>
<keyword id="KW-1185">Reference proteome</keyword>
<keyword id="KW-0807">Transducer</keyword>
<keyword id="KW-0812">Transmembrane</keyword>
<keyword id="KW-1133">Transmembrane helix</keyword>
<protein>
    <recommendedName>
        <fullName evidence="9">Type-1 angiotensin II receptor A</fullName>
    </recommendedName>
    <alternativeName>
        <fullName evidence="10">Angiotensin II type-1 receptor A</fullName>
        <shortName evidence="8">AT1 receptor A</shortName>
    </alternativeName>
</protein>
<proteinExistence type="evidence at protein level"/>
<comment type="function">
    <text evidence="5 7">Receptor for angiotensin II, a vasoconstricting peptide, which acts as a key regulator of blood pressure and sodium retention by the kidney (PubMed:10747880, PubMed:2041570). The activated receptor in turn couples to G-alpha proteins G(q) (GNAQ, GNA11, GNA14 or GNA15) and thus activates phospholipase C and increases the cytosolic Ca(2+) concentrations, which in turn triggers cellular responses such as stimulation of protein kinase C (PubMed:10747880).</text>
</comment>
<comment type="subunit">
    <text evidence="1 6">Interacts with MAS1 (By similarity). Interacts with ARRB1 (PubMed:11579203). Interacts with FLNA (via filamin repeat 21); increases PKA-mediated phosphorylation of FLNA (By similarity).</text>
</comment>
<comment type="interaction">
    <interactant intactId="EBI-764979">
        <id>P25095</id>
    </interactant>
    <interactant intactId="EBI-751728">
        <id>P01019</id>
        <label>AGT</label>
    </interactant>
    <organismsDiffer>true</organismsDiffer>
    <experiments>10</experiments>
</comment>
<comment type="subcellular location">
    <subcellularLocation>
        <location evidence="1">Cell membrane</location>
        <topology evidence="1">Multi-pass membrane protein</topology>
    </subcellularLocation>
</comment>
<comment type="tissue specificity">
    <text evidence="7">Is expressed in the liver, kidney, aorta, lung, uterus, ovary, spleen, heart, adrenal gland, and vascular smooth muscle cell.</text>
</comment>
<comment type="PTM">
    <text evidence="1">C-terminal Ser or Thr residues may be phosphorylated.</text>
</comment>
<comment type="similarity">
    <text evidence="3">Belongs to the G-protein coupled receptor 1 family.</text>
</comment>
<reference key="1">
    <citation type="journal article" date="1991" name="Nature">
        <title>Isolation of a cDNA encoding the vascular type-1 angiotensin II receptor.</title>
        <authorList>
            <person name="Murphy T.J."/>
            <person name="Alexander R.W."/>
            <person name="Griendling K.K."/>
            <person name="Runge M.S."/>
            <person name="Bernstein K.E."/>
        </authorList>
    </citation>
    <scope>NUCLEOTIDE SEQUENCE [MRNA]</scope>
    <scope>FUNCTION</scope>
    <scope>TISSUE SPECIFICITY</scope>
    <source>
        <tissue>Vascular smooth muscle</tissue>
    </source>
</reference>
<reference key="2">
    <citation type="journal article" date="1991" name="Biochem. Biophys. Res. Commun.">
        <title>Rat angiotensin II receptor: cDNA sequence and regulation of the gene expression.</title>
        <authorList>
            <person name="Iwai N."/>
            <person name="Yamano Y."/>
            <person name="Chaki S."/>
            <person name="Konishi F."/>
            <person name="Bardhan S."/>
            <person name="Tibbetts C."/>
            <person name="Sasaki K."/>
            <person name="Hasegawa M."/>
            <person name="Matsuda Y."/>
            <person name="Inagami T."/>
        </authorList>
    </citation>
    <scope>NUCLEOTIDE SEQUENCE [MRNA]</scope>
    <source>
        <tissue>Kidney</tissue>
    </source>
</reference>
<reference key="3">
    <citation type="journal article" date="1992" name="Biochem. Biophys. Res. Commun.">
        <title>The genomic organization of the rat AT1 angiotensin receptor.</title>
        <authorList>
            <person name="Langford K.G."/>
            <person name="Frenzel K."/>
            <person name="Martin B.M."/>
            <person name="Bernstein K.E."/>
        </authorList>
    </citation>
    <scope>NUCLEOTIDE SEQUENCE [GENOMIC DNA]</scope>
</reference>
<reference key="4">
    <citation type="journal article" date="1992" name="FEBS Lett.">
        <title>Identification of two subtypes in the rat type I angiotensin II receptor.</title>
        <authorList>
            <person name="Iwai N."/>
            <person name="Inagami T."/>
        </authorList>
    </citation>
    <scope>NUCLEOTIDE SEQUENCE [MRNA]</scope>
    <source>
        <tissue>Adrenal gland</tissue>
    </source>
</reference>
<reference key="5">
    <citation type="journal article" date="1994" name="Eur. Heart J.">
        <title>Cloning, expression and regulation of angiotensin II receptors.</title>
        <authorList>
            <person name="Inagami T."/>
            <person name="Iwai N."/>
            <person name="Sasaki K."/>
            <person name="Yamano Y."/>
            <person name="Bardhan S."/>
            <person name="Chaki S."/>
            <person name="Guo D.F."/>
            <person name="Furuta H."/>
            <person name="Ohyama K."/>
            <person name="Kambayashi Y."/>
            <person name="Takahashi K."/>
            <person name="Ichiki T."/>
        </authorList>
    </citation>
    <scope>NUCLEOTIDE SEQUENCE [MRNA]</scope>
</reference>
<reference key="6">
    <citation type="journal article" date="2004" name="Genome Res.">
        <title>The status, quality, and expansion of the NIH full-length cDNA project: the Mammalian Gene Collection (MGC).</title>
        <authorList>
            <consortium name="The MGC Project Team"/>
        </authorList>
    </citation>
    <scope>NUCLEOTIDE SEQUENCE [LARGE SCALE MRNA]</scope>
    <source>
        <tissue>Kidney</tissue>
    </source>
</reference>
<reference key="7">
    <citation type="journal article" date="1992" name="Biochem. Biophys. Res. Commun.">
        <title>Characterization of an angiotensin type-1 receptor partial cDNA from rat kidney: evidence for a novel AT1B receptor subtype.</title>
        <authorList>
            <person name="Ye M.Q."/>
            <person name="Healy D.P."/>
        </authorList>
    </citation>
    <scope>NUCLEOTIDE SEQUENCE [MRNA] OF 84-259</scope>
    <source>
        <tissue>Kidney</tissue>
    </source>
</reference>
<reference key="8">
    <citation type="journal article" date="2000" name="J. Biol. Chem.">
        <title>Activation of the AT1 angiotensin receptor is dependent on adjacent apolar residues in the carboxyl terminus of the third cytoplasmic loop.</title>
        <authorList>
            <person name="Zhang M."/>
            <person name="Zhao X."/>
            <person name="Chen H.C."/>
            <person name="Catt K.J."/>
            <person name="Hunyady L."/>
        </authorList>
    </citation>
    <scope>FUNCTION</scope>
    <scope>MUTAGENESIS OF ILE-238 AND PHE-239</scope>
</reference>
<reference key="9">
    <citation type="journal article" date="2001" name="Mol. Endocrinol.">
        <title>Association of beta-Arrestin 1 with the type 1A angiotensin II receptor involves phosphorylation of the receptor carboxyl terminus and correlates with receptor internalization.</title>
        <authorList>
            <person name="Qian H."/>
            <person name="Pipolo L."/>
            <person name="Thomas W.G."/>
        </authorList>
    </citation>
    <scope>INTERACTION WITH ARRB1</scope>
</reference>
<dbReference type="EMBL" id="X62295">
    <property type="protein sequence ID" value="CAA44183.1"/>
    <property type="molecule type" value="mRNA"/>
</dbReference>
<dbReference type="EMBL" id="M74054">
    <property type="protein sequence ID" value="AAA40738.1"/>
    <property type="molecule type" value="mRNA"/>
</dbReference>
<dbReference type="EMBL" id="BC078810">
    <property type="protein sequence ID" value="AAH78810.1"/>
    <property type="molecule type" value="mRNA"/>
</dbReference>
<dbReference type="EMBL" id="M86912">
    <property type="status" value="NOT_ANNOTATED_CDS"/>
    <property type="molecule type" value="Genomic_DNA"/>
</dbReference>
<dbReference type="PIR" id="JC2134">
    <property type="entry name" value="JC2134"/>
</dbReference>
<dbReference type="RefSeq" id="NP_112247.2">
    <property type="nucleotide sequence ID" value="NM_030985.4"/>
</dbReference>
<dbReference type="RefSeq" id="XP_006253944.1">
    <property type="nucleotide sequence ID" value="XM_006253882.3"/>
</dbReference>
<dbReference type="RefSeq" id="XP_008769816.1">
    <property type="nucleotide sequence ID" value="XM_008771594.2"/>
</dbReference>
<dbReference type="SMR" id="P25095"/>
<dbReference type="BioGRID" id="246370">
    <property type="interactions" value="6"/>
</dbReference>
<dbReference type="CORUM" id="P25095"/>
<dbReference type="FunCoup" id="P25095">
    <property type="interactions" value="369"/>
</dbReference>
<dbReference type="IntAct" id="P25095">
    <property type="interactions" value="9"/>
</dbReference>
<dbReference type="MINT" id="P25095"/>
<dbReference type="STRING" id="10116.ENSRNOP00000034687"/>
<dbReference type="BindingDB" id="P25095"/>
<dbReference type="ChEMBL" id="CHEMBL329"/>
<dbReference type="DrugCentral" id="P25095"/>
<dbReference type="GuidetoPHARMACOLOGY" id="34"/>
<dbReference type="GlyCosmos" id="P25095">
    <property type="glycosylation" value="3 sites, No reported glycans"/>
</dbReference>
<dbReference type="GlyGen" id="P25095">
    <property type="glycosylation" value="3 sites"/>
</dbReference>
<dbReference type="iPTMnet" id="P25095"/>
<dbReference type="PhosphoSitePlus" id="P25095"/>
<dbReference type="PaxDb" id="10116-ENSRNOP00000034687"/>
<dbReference type="Ensembl" id="ENSRNOT00000038532.4">
    <property type="protein sequence ID" value="ENSRNOP00000034687.3"/>
    <property type="gene ID" value="ENSRNOG00000018346.5"/>
</dbReference>
<dbReference type="Ensembl" id="ENSRNOT00000102465.1">
    <property type="protein sequence ID" value="ENSRNOP00000091615.1"/>
    <property type="gene ID" value="ENSRNOG00000018346.5"/>
</dbReference>
<dbReference type="GeneID" id="24180"/>
<dbReference type="KEGG" id="rno:24180"/>
<dbReference type="UCSC" id="RGD:2070">
    <property type="organism name" value="rat"/>
</dbReference>
<dbReference type="AGR" id="RGD:2070"/>
<dbReference type="CTD" id="11607"/>
<dbReference type="RGD" id="2070">
    <property type="gene designation" value="Agtr1a"/>
</dbReference>
<dbReference type="eggNOG" id="KOG3656">
    <property type="taxonomic scope" value="Eukaryota"/>
</dbReference>
<dbReference type="GeneTree" id="ENSGT01130000278303"/>
<dbReference type="HOGENOM" id="CLU_009579_8_3_1"/>
<dbReference type="InParanoid" id="P25095"/>
<dbReference type="OMA" id="QVFHFMQ"/>
<dbReference type="OrthoDB" id="8804420at2759"/>
<dbReference type="PhylomeDB" id="P25095"/>
<dbReference type="TreeFam" id="TF330024"/>
<dbReference type="Reactome" id="R-RNO-375276">
    <property type="pathway name" value="Peptide ligand-binding receptors"/>
</dbReference>
<dbReference type="Reactome" id="R-RNO-416476">
    <property type="pathway name" value="G alpha (q) signalling events"/>
</dbReference>
<dbReference type="Reactome" id="R-RNO-8856825">
    <property type="pathway name" value="Cargo recognition for clathrin-mediated endocytosis"/>
</dbReference>
<dbReference type="Reactome" id="R-RNO-8856828">
    <property type="pathway name" value="Clathrin-mediated endocytosis"/>
</dbReference>
<dbReference type="PRO" id="PR:P25095"/>
<dbReference type="Proteomes" id="UP000002494">
    <property type="component" value="Chromosome 17"/>
</dbReference>
<dbReference type="Bgee" id="ENSRNOG00000018346">
    <property type="expression patterns" value="Expressed in liver and 16 other cell types or tissues"/>
</dbReference>
<dbReference type="GO" id="GO:0016323">
    <property type="term" value="C:basolateral plasma membrane"/>
    <property type="evidence" value="ECO:0000314"/>
    <property type="project" value="RGD"/>
</dbReference>
<dbReference type="GO" id="GO:0005737">
    <property type="term" value="C:cytoplasm"/>
    <property type="evidence" value="ECO:0000266"/>
    <property type="project" value="RGD"/>
</dbReference>
<dbReference type="GO" id="GO:0031410">
    <property type="term" value="C:cytoplasmic vesicle"/>
    <property type="evidence" value="ECO:0000314"/>
    <property type="project" value="UniProtKB"/>
</dbReference>
<dbReference type="GO" id="GO:0030425">
    <property type="term" value="C:dendrite"/>
    <property type="evidence" value="ECO:0000314"/>
    <property type="project" value="RGD"/>
</dbReference>
<dbReference type="GO" id="GO:0005768">
    <property type="term" value="C:endosome"/>
    <property type="evidence" value="ECO:0000266"/>
    <property type="project" value="RGD"/>
</dbReference>
<dbReference type="GO" id="GO:0005794">
    <property type="term" value="C:Golgi apparatus"/>
    <property type="evidence" value="ECO:0000314"/>
    <property type="project" value="UniProtKB"/>
</dbReference>
<dbReference type="GO" id="GO:0031968">
    <property type="term" value="C:organelle outer membrane"/>
    <property type="evidence" value="ECO:0000314"/>
    <property type="project" value="RGD"/>
</dbReference>
<dbReference type="GO" id="GO:0005886">
    <property type="term" value="C:plasma membrane"/>
    <property type="evidence" value="ECO:0000314"/>
    <property type="project" value="UniProtKB"/>
</dbReference>
<dbReference type="GO" id="GO:0055037">
    <property type="term" value="C:recycling endosome"/>
    <property type="evidence" value="ECO:0000314"/>
    <property type="project" value="RGD"/>
</dbReference>
<dbReference type="GO" id="GO:0001596">
    <property type="term" value="F:angiotensin type I receptor activity"/>
    <property type="evidence" value="ECO:0000314"/>
    <property type="project" value="UniProtKB"/>
</dbReference>
<dbReference type="GO" id="GO:0004945">
    <property type="term" value="F:angiotensin type II receptor activity"/>
    <property type="evidence" value="ECO:0000266"/>
    <property type="project" value="RGD"/>
</dbReference>
<dbReference type="GO" id="GO:0031711">
    <property type="term" value="F:bradykinin receptor binding"/>
    <property type="evidence" value="ECO:0000266"/>
    <property type="project" value="RGD"/>
</dbReference>
<dbReference type="GO" id="GO:0031748">
    <property type="term" value="F:D1 dopamine receptor binding"/>
    <property type="evidence" value="ECO:0000353"/>
    <property type="project" value="RGD"/>
</dbReference>
<dbReference type="GO" id="GO:0046982">
    <property type="term" value="F:protein heterodimerization activity"/>
    <property type="evidence" value="ECO:0000266"/>
    <property type="project" value="RGD"/>
</dbReference>
<dbReference type="GO" id="GO:0019901">
    <property type="term" value="F:protein kinase binding"/>
    <property type="evidence" value="ECO:0000353"/>
    <property type="project" value="RGD"/>
</dbReference>
<dbReference type="GO" id="GO:0038166">
    <property type="term" value="P:angiotensin-activated signaling pathway"/>
    <property type="evidence" value="ECO:0000315"/>
    <property type="project" value="BHF-UCL"/>
</dbReference>
<dbReference type="GO" id="GO:0001568">
    <property type="term" value="P:blood vessel development"/>
    <property type="evidence" value="ECO:0000266"/>
    <property type="project" value="RGD"/>
</dbReference>
<dbReference type="GO" id="GO:0002035">
    <property type="term" value="P:brain renin-angiotensin system"/>
    <property type="evidence" value="ECO:0000266"/>
    <property type="project" value="RGD"/>
</dbReference>
<dbReference type="GO" id="GO:0019722">
    <property type="term" value="P:calcium-mediated signaling"/>
    <property type="evidence" value="ECO:0000266"/>
    <property type="project" value="RGD"/>
</dbReference>
<dbReference type="GO" id="GO:0060326">
    <property type="term" value="P:cell chemotaxis"/>
    <property type="evidence" value="ECO:0000266"/>
    <property type="project" value="RGD"/>
</dbReference>
<dbReference type="GO" id="GO:0071549">
    <property type="term" value="P:cellular response to dexamethasone stimulus"/>
    <property type="evidence" value="ECO:0000314"/>
    <property type="project" value="UniProtKB"/>
</dbReference>
<dbReference type="GO" id="GO:0042416">
    <property type="term" value="P:dopamine biosynthetic process"/>
    <property type="evidence" value="ECO:0000315"/>
    <property type="project" value="RGD"/>
</dbReference>
<dbReference type="GO" id="GO:0042756">
    <property type="term" value="P:drinking behavior"/>
    <property type="evidence" value="ECO:0000315"/>
    <property type="project" value="RGD"/>
</dbReference>
<dbReference type="GO" id="GO:0007186">
    <property type="term" value="P:G protein-coupled receptor signaling pathway"/>
    <property type="evidence" value="ECO:0000315"/>
    <property type="project" value="RGD"/>
</dbReference>
<dbReference type="GO" id="GO:0010467">
    <property type="term" value="P:gene expression"/>
    <property type="evidence" value="ECO:0000266"/>
    <property type="project" value="RGD"/>
</dbReference>
<dbReference type="GO" id="GO:0007507">
    <property type="term" value="P:heart development"/>
    <property type="evidence" value="ECO:0000266"/>
    <property type="project" value="RGD"/>
</dbReference>
<dbReference type="GO" id="GO:0006954">
    <property type="term" value="P:inflammatory response"/>
    <property type="evidence" value="ECO:0000266"/>
    <property type="project" value="RGD"/>
</dbReference>
<dbReference type="GO" id="GO:0001822">
    <property type="term" value="P:kidney development"/>
    <property type="evidence" value="ECO:0000266"/>
    <property type="project" value="RGD"/>
</dbReference>
<dbReference type="GO" id="GO:0002034">
    <property type="term" value="P:maintenance of blood vessel diameter homeostasis by renin-angiotensin"/>
    <property type="evidence" value="ECO:0000250"/>
    <property type="project" value="UniProtKB"/>
</dbReference>
<dbReference type="GO" id="GO:0034392">
    <property type="term" value="P:negative regulation of smooth muscle cell apoptotic process"/>
    <property type="evidence" value="ECO:0000266"/>
    <property type="project" value="RGD"/>
</dbReference>
<dbReference type="GO" id="GO:0051402">
    <property type="term" value="P:neuron apoptotic process"/>
    <property type="evidence" value="ECO:0000266"/>
    <property type="project" value="RGD"/>
</dbReference>
<dbReference type="GO" id="GO:0086097">
    <property type="term" value="P:phospholipase C-activating angiotensin-activated signaling pathway"/>
    <property type="evidence" value="ECO:0000266"/>
    <property type="project" value="RGD"/>
</dbReference>
<dbReference type="GO" id="GO:0007200">
    <property type="term" value="P:phospholipase C-activating G protein-coupled receptor signaling pathway"/>
    <property type="evidence" value="ECO:0000314"/>
    <property type="project" value="RGD"/>
</dbReference>
<dbReference type="GO" id="GO:0045766">
    <property type="term" value="P:positive regulation of angiogenesis"/>
    <property type="evidence" value="ECO:0000315"/>
    <property type="project" value="RGD"/>
</dbReference>
<dbReference type="GO" id="GO:0045777">
    <property type="term" value="P:positive regulation of blood pressure"/>
    <property type="evidence" value="ECO:0000315"/>
    <property type="project" value="BHF-UCL"/>
</dbReference>
<dbReference type="GO" id="GO:1903589">
    <property type="term" value="P:positive regulation of blood vessel endothelial cell proliferation involved in sprouting angiogenesis"/>
    <property type="evidence" value="ECO:0000266"/>
    <property type="project" value="RGD"/>
</dbReference>
<dbReference type="GO" id="GO:0090190">
    <property type="term" value="P:positive regulation of branching involved in ureteric bud morphogenesis"/>
    <property type="evidence" value="ECO:0000315"/>
    <property type="project" value="UniProtKB"/>
</dbReference>
<dbReference type="GO" id="GO:1905665">
    <property type="term" value="P:positive regulation of calcium ion import across plasma membrane"/>
    <property type="evidence" value="ECO:0000315"/>
    <property type="project" value="RGD"/>
</dbReference>
<dbReference type="GO" id="GO:0008284">
    <property type="term" value="P:positive regulation of cell population proliferation"/>
    <property type="evidence" value="ECO:0000315"/>
    <property type="project" value="RGD"/>
</dbReference>
<dbReference type="GO" id="GO:0001819">
    <property type="term" value="P:positive regulation of cytokine production"/>
    <property type="evidence" value="ECO:0000266"/>
    <property type="project" value="RGD"/>
</dbReference>
<dbReference type="GO" id="GO:0007204">
    <property type="term" value="P:positive regulation of cytosolic calcium ion concentration"/>
    <property type="evidence" value="ECO:0000266"/>
    <property type="project" value="RGD"/>
</dbReference>
<dbReference type="GO" id="GO:0010744">
    <property type="term" value="P:positive regulation of macrophage derived foam cell differentiation"/>
    <property type="evidence" value="ECO:0000266"/>
    <property type="project" value="RGD"/>
</dbReference>
<dbReference type="GO" id="GO:0051247">
    <property type="term" value="P:positive regulation of protein metabolic process"/>
    <property type="evidence" value="ECO:0000266"/>
    <property type="project" value="RGD"/>
</dbReference>
<dbReference type="GO" id="GO:0001921">
    <property type="term" value="P:positive regulation of receptor recycling"/>
    <property type="evidence" value="ECO:0000314"/>
    <property type="project" value="UniProtKB"/>
</dbReference>
<dbReference type="GO" id="GO:0032930">
    <property type="term" value="P:positive regulation of superoxide anion generation"/>
    <property type="evidence" value="ECO:0000315"/>
    <property type="project" value="RGD"/>
</dbReference>
<dbReference type="GO" id="GO:1904707">
    <property type="term" value="P:positive regulation of vascular associated smooth muscle cell proliferation"/>
    <property type="evidence" value="ECO:0000266"/>
    <property type="project" value="RGD"/>
</dbReference>
<dbReference type="GO" id="GO:0008217">
    <property type="term" value="P:regulation of blood pressure"/>
    <property type="evidence" value="ECO:0000266"/>
    <property type="project" value="RGD"/>
</dbReference>
<dbReference type="GO" id="GO:0006885">
    <property type="term" value="P:regulation of pH"/>
    <property type="evidence" value="ECO:0000314"/>
    <property type="project" value="RGD"/>
</dbReference>
<dbReference type="GO" id="GO:0002019">
    <property type="term" value="P:regulation of renal output by angiotensin"/>
    <property type="evidence" value="ECO:0000266"/>
    <property type="project" value="RGD"/>
</dbReference>
<dbReference type="GO" id="GO:0001991">
    <property type="term" value="P:regulation of systemic arterial blood pressure by circulatory renin-angiotensin"/>
    <property type="evidence" value="ECO:0000266"/>
    <property type="project" value="RGD"/>
</dbReference>
<dbReference type="GO" id="GO:1905459">
    <property type="term" value="P:regulation of vascular associated smooth muscle cell apoptotic process"/>
    <property type="evidence" value="ECO:0000266"/>
    <property type="project" value="RGD"/>
</dbReference>
<dbReference type="GO" id="GO:0019229">
    <property type="term" value="P:regulation of vasoconstriction"/>
    <property type="evidence" value="ECO:0000266"/>
    <property type="project" value="RGD"/>
</dbReference>
<dbReference type="GO" id="GO:0002001">
    <property type="term" value="P:renin secretion into blood stream"/>
    <property type="evidence" value="ECO:0000266"/>
    <property type="project" value="RGD"/>
</dbReference>
<dbReference type="GO" id="GO:0002018">
    <property type="term" value="P:renin-angiotensin regulation of aldosterone production"/>
    <property type="evidence" value="ECO:0000315"/>
    <property type="project" value="RGD"/>
</dbReference>
<dbReference type="GO" id="GO:0014823">
    <property type="term" value="P:response to activity"/>
    <property type="evidence" value="ECO:0000270"/>
    <property type="project" value="RGD"/>
</dbReference>
<dbReference type="GO" id="GO:1990776">
    <property type="term" value="P:response to angiotensin"/>
    <property type="evidence" value="ECO:0000270"/>
    <property type="project" value="RGD"/>
</dbReference>
<dbReference type="GO" id="GO:0051412">
    <property type="term" value="P:response to corticosterone"/>
    <property type="evidence" value="ECO:0000270"/>
    <property type="project" value="RGD"/>
</dbReference>
<dbReference type="GO" id="GO:0043627">
    <property type="term" value="P:response to estrogen"/>
    <property type="evidence" value="ECO:0000314"/>
    <property type="project" value="RGD"/>
</dbReference>
<dbReference type="GO" id="GO:0009651">
    <property type="term" value="P:response to salt stress"/>
    <property type="evidence" value="ECO:0000270"/>
    <property type="project" value="RGD"/>
</dbReference>
<dbReference type="GO" id="GO:0007266">
    <property type="term" value="P:Rho protein signal transduction"/>
    <property type="evidence" value="ECO:0000266"/>
    <property type="project" value="RGD"/>
</dbReference>
<dbReference type="GO" id="GO:1990874">
    <property type="term" value="P:vascular associated smooth muscle cell proliferation"/>
    <property type="evidence" value="ECO:0000266"/>
    <property type="project" value="RGD"/>
</dbReference>
<dbReference type="GO" id="GO:0042310">
    <property type="term" value="P:vasoconstriction"/>
    <property type="evidence" value="ECO:0000315"/>
    <property type="project" value="RGD"/>
</dbReference>
<dbReference type="CDD" id="cd15192">
    <property type="entry name" value="7tmA_AT1R"/>
    <property type="match status" value="1"/>
</dbReference>
<dbReference type="FunFam" id="1.20.1070.10:FF:000088">
    <property type="entry name" value="Angiotensin II receptor type 1"/>
    <property type="match status" value="1"/>
</dbReference>
<dbReference type="Gene3D" id="1.20.1070.10">
    <property type="entry name" value="Rhodopsin 7-helix transmembrane proteins"/>
    <property type="match status" value="1"/>
</dbReference>
<dbReference type="InterPro" id="IPR000190">
    <property type="entry name" value="ATII_AT1_rcpt"/>
</dbReference>
<dbReference type="InterPro" id="IPR000248">
    <property type="entry name" value="ATII_rcpt"/>
</dbReference>
<dbReference type="InterPro" id="IPR050119">
    <property type="entry name" value="CCR1-9-like"/>
</dbReference>
<dbReference type="InterPro" id="IPR000276">
    <property type="entry name" value="GPCR_Rhodpsn"/>
</dbReference>
<dbReference type="InterPro" id="IPR017452">
    <property type="entry name" value="GPCR_Rhodpsn_7TM"/>
</dbReference>
<dbReference type="PANTHER" id="PTHR10489">
    <property type="entry name" value="CELL ADHESION MOLECULE"/>
    <property type="match status" value="1"/>
</dbReference>
<dbReference type="PANTHER" id="PTHR10489:SF956">
    <property type="entry name" value="TYPE-1 ANGIOTENSIN II RECEPTOR A"/>
    <property type="match status" value="1"/>
</dbReference>
<dbReference type="Pfam" id="PF00001">
    <property type="entry name" value="7tm_1"/>
    <property type="match status" value="1"/>
</dbReference>
<dbReference type="PRINTS" id="PR00241">
    <property type="entry name" value="ANGIOTENSINR"/>
</dbReference>
<dbReference type="PRINTS" id="PR00635">
    <property type="entry name" value="ANGIOTENSN1R"/>
</dbReference>
<dbReference type="PRINTS" id="PR00237">
    <property type="entry name" value="GPCRRHODOPSN"/>
</dbReference>
<dbReference type="SMART" id="SM01381">
    <property type="entry name" value="7TM_GPCR_Srsx"/>
    <property type="match status" value="1"/>
</dbReference>
<dbReference type="SUPFAM" id="SSF81321">
    <property type="entry name" value="Family A G protein-coupled receptor-like"/>
    <property type="match status" value="1"/>
</dbReference>
<dbReference type="PROSITE" id="PS00237">
    <property type="entry name" value="G_PROTEIN_RECEP_F1_1"/>
    <property type="match status" value="1"/>
</dbReference>
<dbReference type="PROSITE" id="PS50262">
    <property type="entry name" value="G_PROTEIN_RECEP_F1_2"/>
    <property type="match status" value="1"/>
</dbReference>
<feature type="chain" id="PRO_0000069160" description="Type-1 angiotensin II receptor A">
    <location>
        <begin position="1"/>
        <end position="359"/>
    </location>
</feature>
<feature type="topological domain" description="Extracellular" evidence="1">
    <location>
        <begin position="1"/>
        <end position="25"/>
    </location>
</feature>
<feature type="transmembrane region" description="Helical; Name=1" evidence="1">
    <location>
        <begin position="26"/>
        <end position="55"/>
    </location>
</feature>
<feature type="topological domain" description="Cytoplasmic" evidence="1">
    <location>
        <begin position="56"/>
        <end position="61"/>
    </location>
</feature>
<feature type="transmembrane region" description="Helical; Name=2" evidence="1">
    <location>
        <begin position="62"/>
        <end position="89"/>
    </location>
</feature>
<feature type="topological domain" description="Extracellular" evidence="1">
    <location>
        <begin position="90"/>
        <end position="98"/>
    </location>
</feature>
<feature type="transmembrane region" description="Helical; Name=3" evidence="1">
    <location>
        <begin position="99"/>
        <end position="125"/>
    </location>
</feature>
<feature type="topological domain" description="Cytoplasmic" evidence="1">
    <location>
        <begin position="126"/>
        <end position="141"/>
    </location>
</feature>
<feature type="transmembrane region" description="Helical; Name=4" evidence="1">
    <location>
        <begin position="142"/>
        <end position="165"/>
    </location>
</feature>
<feature type="topological domain" description="Extracellular" evidence="1">
    <location>
        <begin position="166"/>
        <end position="190"/>
    </location>
</feature>
<feature type="transmembrane region" description="Helical; Name=5" evidence="1">
    <location>
        <begin position="191"/>
        <end position="216"/>
    </location>
</feature>
<feature type="topological domain" description="Cytoplasmic" evidence="1">
    <location>
        <begin position="217"/>
        <end position="239"/>
    </location>
</feature>
<feature type="transmembrane region" description="Helical; Name=6" evidence="1">
    <location>
        <begin position="240"/>
        <end position="268"/>
    </location>
</feature>
<feature type="topological domain" description="Extracellular" evidence="1">
    <location>
        <begin position="269"/>
        <end position="278"/>
    </location>
</feature>
<feature type="transmembrane region" description="Helical; Name=7" evidence="1">
    <location>
        <begin position="279"/>
        <end position="304"/>
    </location>
</feature>
<feature type="topological domain" description="Cytoplasmic" evidence="1">
    <location>
        <begin position="305"/>
        <end position="359"/>
    </location>
</feature>
<feature type="region of interest" description="Disordered" evidence="4">
    <location>
        <begin position="337"/>
        <end position="359"/>
    </location>
</feature>
<feature type="compositionally biased region" description="Polar residues" evidence="4">
    <location>
        <begin position="337"/>
        <end position="349"/>
    </location>
</feature>
<feature type="binding site" evidence="1">
    <location>
        <position position="15"/>
    </location>
    <ligand>
        <name>angiotensin II</name>
        <dbReference type="ChEBI" id="CHEBI:58506"/>
    </ligand>
</feature>
<feature type="binding site" evidence="1">
    <location>
        <position position="17"/>
    </location>
    <ligand>
        <name>angiotensin II</name>
        <dbReference type="ChEBI" id="CHEBI:58506"/>
    </ligand>
</feature>
<feature type="binding site" evidence="1">
    <location>
        <position position="167"/>
    </location>
    <ligand>
        <name>angiotensin II</name>
        <dbReference type="ChEBI" id="CHEBI:58506"/>
    </ligand>
</feature>
<feature type="binding site" evidence="1">
    <location>
        <position position="182"/>
    </location>
    <ligand>
        <name>angiotensin II</name>
        <dbReference type="ChEBI" id="CHEBI:58506"/>
    </ligand>
</feature>
<feature type="binding site" evidence="1">
    <location>
        <position position="183"/>
    </location>
    <ligand>
        <name>angiotensin II</name>
        <dbReference type="ChEBI" id="CHEBI:58506"/>
    </ligand>
</feature>
<feature type="binding site" evidence="1">
    <location>
        <position position="184"/>
    </location>
    <ligand>
        <name>angiotensin II</name>
        <dbReference type="ChEBI" id="CHEBI:58506"/>
    </ligand>
</feature>
<feature type="binding site" evidence="1">
    <location>
        <position position="199"/>
    </location>
    <ligand>
        <name>angiotensin II</name>
        <dbReference type="ChEBI" id="CHEBI:58506"/>
    </ligand>
</feature>
<feature type="lipid moiety-binding region" description="S-palmitoyl cysteine" evidence="2">
    <location>
        <position position="355"/>
    </location>
</feature>
<feature type="glycosylation site" description="N-linked (GlcNAc...) asparagine" evidence="2">
    <location>
        <position position="4"/>
    </location>
</feature>
<feature type="glycosylation site" description="N-linked (GlcNAc...) asparagine" evidence="2">
    <location>
        <position position="176"/>
    </location>
</feature>
<feature type="glycosylation site" description="N-linked (GlcNAc...) asparagine" evidence="2">
    <location>
        <position position="188"/>
    </location>
</feature>
<feature type="disulfide bond" evidence="1">
    <location>
        <begin position="18"/>
        <end position="274"/>
    </location>
</feature>
<feature type="disulfide bond" evidence="3">
    <location>
        <begin position="101"/>
        <end position="180"/>
    </location>
</feature>
<feature type="mutagenesis site" description="Decreased angiotensin II-induced inositol phosphate response." evidence="5">
    <original>I</original>
    <variation>A</variation>
    <variation>S</variation>
    <variation>K</variation>
    <location>
        <position position="238"/>
    </location>
</feature>
<feature type="mutagenesis site" description="Abolished angiotensin II-induced inositol phosphate response." evidence="5">
    <original>I</original>
    <variation>D</variation>
    <location>
        <position position="238"/>
    </location>
</feature>
<feature type="mutagenesis site" description="Reduced angiotensin II-induced inositol phosphate response." evidence="5">
    <original>F</original>
    <variation>D</variation>
    <location>
        <position position="239"/>
    </location>
</feature>
<feature type="mutagenesis site" description="Increased angiotensin II-induced inositol phosphate response." evidence="5">
    <original>F</original>
    <variation>R</variation>
    <variation>K</variation>
    <location>
        <position position="239"/>
    </location>
</feature>
<feature type="sequence conflict" description="In Ref. 2; AAA40738." evidence="11" ref="2">
    <original>L</original>
    <variation>C</variation>
    <location>
        <position position="81"/>
    </location>
</feature>
<feature type="sequence conflict" description="In Ref. 2; AAA40738." evidence="11" ref="2">
    <original>S</original>
    <variation>T</variation>
    <location>
        <position position="109"/>
    </location>
</feature>
<sequence length="359" mass="40890">MALNSSAEDGIKRIQDDCPKAGRHSYIFVMIPTLYSIIFVVGIFGNSLVVIVIYFYMKLKTVASVFLLNLALADLCFLLTLPLWAVYTAMEYRWPFGNHLCKIASASVSFNLYASVFLLTCLSIDRYLAIVHPMKSRLRRTMLVAKVTCIIIWLMAGLASLPAVIHRNVYFIENTNITVCAFHYESRNSTLPIGLGLTKNILGFLFPFLIILTSYTLIWKALKKAYEIQKNKPRNDDIFRIIMAIVLFFFFSWVPHQIFTFLDVLIQLGVIHDCKISDIVDTAMPITICIAYFNNCLNPLFYGFLGKKFKKYFLQLLKYIPPKAKSHSSLSTKMSTLSYRPSDNMSSSAKKPASCFEVE</sequence>
<accession>P25095</accession>
<accession>Q9QVS5</accession>